<accession>Q48PH0</accession>
<reference key="1">
    <citation type="journal article" date="2005" name="J. Bacteriol.">
        <title>Whole-genome sequence analysis of Pseudomonas syringae pv. phaseolicola 1448A reveals divergence among pathovars in genes involved in virulence and transposition.</title>
        <authorList>
            <person name="Joardar V."/>
            <person name="Lindeberg M."/>
            <person name="Jackson R.W."/>
            <person name="Selengut J."/>
            <person name="Dodson R."/>
            <person name="Brinkac L.M."/>
            <person name="Daugherty S.C."/>
            <person name="DeBoy R.T."/>
            <person name="Durkin A.S."/>
            <person name="Gwinn Giglio M."/>
            <person name="Madupu R."/>
            <person name="Nelson W.C."/>
            <person name="Rosovitz M.J."/>
            <person name="Sullivan S.A."/>
            <person name="Crabtree J."/>
            <person name="Creasy T."/>
            <person name="Davidsen T.M."/>
            <person name="Haft D.H."/>
            <person name="Zafar N."/>
            <person name="Zhou L."/>
            <person name="Halpin R."/>
            <person name="Holley T."/>
            <person name="Khouri H.M."/>
            <person name="Feldblyum T.V."/>
            <person name="White O."/>
            <person name="Fraser C.M."/>
            <person name="Chatterjee A.K."/>
            <person name="Cartinhour S."/>
            <person name="Schneider D."/>
            <person name="Mansfield J.W."/>
            <person name="Collmer A."/>
            <person name="Buell R."/>
        </authorList>
    </citation>
    <scope>NUCLEOTIDE SEQUENCE [LARGE SCALE GENOMIC DNA]</scope>
    <source>
        <strain>1448A / Race 6</strain>
    </source>
</reference>
<comment type="function">
    <text evidence="1">Catalyzes the conversion of 3-deoxy-D-arabino-heptulosonate 7-phosphate (DAHP) to dehydroquinate (DHQ).</text>
</comment>
<comment type="catalytic activity">
    <reaction evidence="1">
        <text>7-phospho-2-dehydro-3-deoxy-D-arabino-heptonate = 3-dehydroquinate + phosphate</text>
        <dbReference type="Rhea" id="RHEA:21968"/>
        <dbReference type="ChEBI" id="CHEBI:32364"/>
        <dbReference type="ChEBI" id="CHEBI:43474"/>
        <dbReference type="ChEBI" id="CHEBI:58394"/>
        <dbReference type="EC" id="4.2.3.4"/>
    </reaction>
</comment>
<comment type="cofactor">
    <cofactor evidence="1">
        <name>Co(2+)</name>
        <dbReference type="ChEBI" id="CHEBI:48828"/>
    </cofactor>
    <cofactor evidence="1">
        <name>Zn(2+)</name>
        <dbReference type="ChEBI" id="CHEBI:29105"/>
    </cofactor>
    <text evidence="1">Binds 1 divalent metal cation per subunit. Can use either Co(2+) or Zn(2+).</text>
</comment>
<comment type="cofactor">
    <cofactor evidence="1">
        <name>NAD(+)</name>
        <dbReference type="ChEBI" id="CHEBI:57540"/>
    </cofactor>
</comment>
<comment type="pathway">
    <text evidence="1">Metabolic intermediate biosynthesis; chorismate biosynthesis; chorismate from D-erythrose 4-phosphate and phosphoenolpyruvate: step 2/7.</text>
</comment>
<comment type="subcellular location">
    <subcellularLocation>
        <location evidence="1">Cytoplasm</location>
    </subcellularLocation>
</comment>
<comment type="similarity">
    <text evidence="1">Belongs to the sugar phosphate cyclases superfamily. Dehydroquinate synthase family.</text>
</comment>
<protein>
    <recommendedName>
        <fullName evidence="1">3-dehydroquinate synthase</fullName>
        <shortName evidence="1">DHQS</shortName>
        <ecNumber evidence="1">4.2.3.4</ecNumber>
    </recommendedName>
</protein>
<evidence type="ECO:0000255" key="1">
    <source>
        <dbReference type="HAMAP-Rule" id="MF_00110"/>
    </source>
</evidence>
<dbReference type="EC" id="4.2.3.4" evidence="1"/>
<dbReference type="EMBL" id="CP000058">
    <property type="protein sequence ID" value="AAZ33452.1"/>
    <property type="molecule type" value="Genomic_DNA"/>
</dbReference>
<dbReference type="RefSeq" id="WP_002551658.1">
    <property type="nucleotide sequence ID" value="NC_005773.3"/>
</dbReference>
<dbReference type="SMR" id="Q48PH0"/>
<dbReference type="GeneID" id="61867745"/>
<dbReference type="KEGG" id="psp:PSPPH_0396"/>
<dbReference type="eggNOG" id="COG0337">
    <property type="taxonomic scope" value="Bacteria"/>
</dbReference>
<dbReference type="HOGENOM" id="CLU_001201_0_2_6"/>
<dbReference type="UniPathway" id="UPA00053">
    <property type="reaction ID" value="UER00085"/>
</dbReference>
<dbReference type="Proteomes" id="UP000000551">
    <property type="component" value="Chromosome"/>
</dbReference>
<dbReference type="GO" id="GO:0005737">
    <property type="term" value="C:cytoplasm"/>
    <property type="evidence" value="ECO:0007669"/>
    <property type="project" value="UniProtKB-SubCell"/>
</dbReference>
<dbReference type="GO" id="GO:0003856">
    <property type="term" value="F:3-dehydroquinate synthase activity"/>
    <property type="evidence" value="ECO:0007669"/>
    <property type="project" value="UniProtKB-UniRule"/>
</dbReference>
<dbReference type="GO" id="GO:0046872">
    <property type="term" value="F:metal ion binding"/>
    <property type="evidence" value="ECO:0007669"/>
    <property type="project" value="UniProtKB-KW"/>
</dbReference>
<dbReference type="GO" id="GO:0000166">
    <property type="term" value="F:nucleotide binding"/>
    <property type="evidence" value="ECO:0007669"/>
    <property type="project" value="UniProtKB-KW"/>
</dbReference>
<dbReference type="GO" id="GO:0008652">
    <property type="term" value="P:amino acid biosynthetic process"/>
    <property type="evidence" value="ECO:0007669"/>
    <property type="project" value="UniProtKB-KW"/>
</dbReference>
<dbReference type="GO" id="GO:0009073">
    <property type="term" value="P:aromatic amino acid family biosynthetic process"/>
    <property type="evidence" value="ECO:0007669"/>
    <property type="project" value="UniProtKB-KW"/>
</dbReference>
<dbReference type="GO" id="GO:0009423">
    <property type="term" value="P:chorismate biosynthetic process"/>
    <property type="evidence" value="ECO:0007669"/>
    <property type="project" value="UniProtKB-UniRule"/>
</dbReference>
<dbReference type="CDD" id="cd08195">
    <property type="entry name" value="DHQS"/>
    <property type="match status" value="1"/>
</dbReference>
<dbReference type="FunFam" id="1.20.1090.10:FF:000002">
    <property type="entry name" value="3-dehydroquinate synthase"/>
    <property type="match status" value="1"/>
</dbReference>
<dbReference type="FunFam" id="3.40.50.1970:FF:000001">
    <property type="entry name" value="3-dehydroquinate synthase"/>
    <property type="match status" value="1"/>
</dbReference>
<dbReference type="Gene3D" id="3.40.50.1970">
    <property type="match status" value="1"/>
</dbReference>
<dbReference type="Gene3D" id="1.20.1090.10">
    <property type="entry name" value="Dehydroquinate synthase-like - alpha domain"/>
    <property type="match status" value="1"/>
</dbReference>
<dbReference type="HAMAP" id="MF_00110">
    <property type="entry name" value="DHQ_synthase"/>
    <property type="match status" value="1"/>
</dbReference>
<dbReference type="InterPro" id="IPR050071">
    <property type="entry name" value="Dehydroquinate_synthase"/>
</dbReference>
<dbReference type="InterPro" id="IPR016037">
    <property type="entry name" value="DHQ_synth_AroB"/>
</dbReference>
<dbReference type="InterPro" id="IPR030963">
    <property type="entry name" value="DHQ_synth_fam"/>
</dbReference>
<dbReference type="InterPro" id="IPR030960">
    <property type="entry name" value="DHQS/DOIS_N"/>
</dbReference>
<dbReference type="InterPro" id="IPR056179">
    <property type="entry name" value="DHQS_C"/>
</dbReference>
<dbReference type="NCBIfam" id="TIGR01357">
    <property type="entry name" value="aroB"/>
    <property type="match status" value="1"/>
</dbReference>
<dbReference type="PANTHER" id="PTHR43622">
    <property type="entry name" value="3-DEHYDROQUINATE SYNTHASE"/>
    <property type="match status" value="1"/>
</dbReference>
<dbReference type="PANTHER" id="PTHR43622:SF7">
    <property type="entry name" value="3-DEHYDROQUINATE SYNTHASE, CHLOROPLASTIC"/>
    <property type="match status" value="1"/>
</dbReference>
<dbReference type="Pfam" id="PF01761">
    <property type="entry name" value="DHQ_synthase"/>
    <property type="match status" value="1"/>
</dbReference>
<dbReference type="Pfam" id="PF24621">
    <property type="entry name" value="DHQS_C"/>
    <property type="match status" value="1"/>
</dbReference>
<dbReference type="PIRSF" id="PIRSF001455">
    <property type="entry name" value="DHQ_synth"/>
    <property type="match status" value="1"/>
</dbReference>
<dbReference type="SUPFAM" id="SSF56796">
    <property type="entry name" value="Dehydroquinate synthase-like"/>
    <property type="match status" value="1"/>
</dbReference>
<keyword id="KW-0028">Amino-acid biosynthesis</keyword>
<keyword id="KW-0057">Aromatic amino acid biosynthesis</keyword>
<keyword id="KW-0170">Cobalt</keyword>
<keyword id="KW-0963">Cytoplasm</keyword>
<keyword id="KW-0456">Lyase</keyword>
<keyword id="KW-0479">Metal-binding</keyword>
<keyword id="KW-0520">NAD</keyword>
<keyword id="KW-0547">Nucleotide-binding</keyword>
<keyword id="KW-0862">Zinc</keyword>
<feature type="chain" id="PRO_0000231116" description="3-dehydroquinate synthase">
    <location>
        <begin position="1"/>
        <end position="367"/>
    </location>
</feature>
<feature type="binding site" evidence="1">
    <location>
        <begin position="69"/>
        <end position="74"/>
    </location>
    <ligand>
        <name>NAD(+)</name>
        <dbReference type="ChEBI" id="CHEBI:57540"/>
    </ligand>
</feature>
<feature type="binding site" evidence="1">
    <location>
        <begin position="103"/>
        <end position="107"/>
    </location>
    <ligand>
        <name>NAD(+)</name>
        <dbReference type="ChEBI" id="CHEBI:57540"/>
    </ligand>
</feature>
<feature type="binding site" evidence="1">
    <location>
        <begin position="127"/>
        <end position="128"/>
    </location>
    <ligand>
        <name>NAD(+)</name>
        <dbReference type="ChEBI" id="CHEBI:57540"/>
    </ligand>
</feature>
<feature type="binding site" evidence="1">
    <location>
        <position position="140"/>
    </location>
    <ligand>
        <name>NAD(+)</name>
        <dbReference type="ChEBI" id="CHEBI:57540"/>
    </ligand>
</feature>
<feature type="binding site" evidence="1">
    <location>
        <position position="149"/>
    </location>
    <ligand>
        <name>NAD(+)</name>
        <dbReference type="ChEBI" id="CHEBI:57540"/>
    </ligand>
</feature>
<feature type="binding site" evidence="1">
    <location>
        <position position="182"/>
    </location>
    <ligand>
        <name>Zn(2+)</name>
        <dbReference type="ChEBI" id="CHEBI:29105"/>
    </ligand>
</feature>
<feature type="binding site" evidence="1">
    <location>
        <position position="245"/>
    </location>
    <ligand>
        <name>Zn(2+)</name>
        <dbReference type="ChEBI" id="CHEBI:29105"/>
    </ligand>
</feature>
<feature type="binding site" evidence="1">
    <location>
        <position position="262"/>
    </location>
    <ligand>
        <name>Zn(2+)</name>
        <dbReference type="ChEBI" id="CHEBI:29105"/>
    </ligand>
</feature>
<sequence length="367" mass="39999">MQTLKVELGERSYPIHIGEGLLDQPELLTPHIVGRQVAIVSNTTVAPLYLERLTQTLAGYNVLPIVLPDGEAFKNWETLQTIFDGLLTARHDRRTTVIALGGGVIGDMAGFAAACYQRGVNFIQIPTTLLSQVDSSVGGKTGINHPLGKNMVGAFYQPSVVLIDTTSLNTLPERELSAGLAEVIKYGLICDEPFLTWLEEHVDALRGLDQAALTVAIERSCAAKALVVGADERESGVRATLNLGHTFGHAIETHMGYGVWLHGEAVAAGTVMALEMSSRLGWISTQDRDRGIRLFQRAGLPVVPPQDMTEDNFLEHMAIDKKVIDGRLRLVLLRQMGEAVITDDYPKEVLQATLVADYRALVDQLRG</sequence>
<name>AROB_PSE14</name>
<proteinExistence type="inferred from homology"/>
<gene>
    <name evidence="1" type="primary">aroB</name>
    <name type="ordered locus">PSPPH_0396</name>
</gene>
<organism>
    <name type="scientific">Pseudomonas savastanoi pv. phaseolicola (strain 1448A / Race 6)</name>
    <name type="common">Pseudomonas syringae pv. phaseolicola (strain 1448A / Race 6)</name>
    <dbReference type="NCBI Taxonomy" id="264730"/>
    <lineage>
        <taxon>Bacteria</taxon>
        <taxon>Pseudomonadati</taxon>
        <taxon>Pseudomonadota</taxon>
        <taxon>Gammaproteobacteria</taxon>
        <taxon>Pseudomonadales</taxon>
        <taxon>Pseudomonadaceae</taxon>
        <taxon>Pseudomonas</taxon>
    </lineage>
</organism>